<accession>Q8BGH4</accession>
<sequence>MVSWIISRLVVLIFGTLYPAYYSYKAVKSKDIKEYVKWMMYWIIFALFTTAETFTDIFLCWFPFYYELKIAFVAWLLSPYTKGSSLLYRKFVHPTLSSKEKEIDDCLVQAKDRSYDALVHFGKRGLNVAATAAVMAASKGQGALSERLRSFSMQDLTTIRGDGAPAPSGPPPPGTGRSSGKHSQPKMSRSASESAGSSGTA</sequence>
<name>REEP1_MOUSE</name>
<organism>
    <name type="scientific">Mus musculus</name>
    <name type="common">Mouse</name>
    <dbReference type="NCBI Taxonomy" id="10090"/>
    <lineage>
        <taxon>Eukaryota</taxon>
        <taxon>Metazoa</taxon>
        <taxon>Chordata</taxon>
        <taxon>Craniata</taxon>
        <taxon>Vertebrata</taxon>
        <taxon>Euteleostomi</taxon>
        <taxon>Mammalia</taxon>
        <taxon>Eutheria</taxon>
        <taxon>Euarchontoglires</taxon>
        <taxon>Glires</taxon>
        <taxon>Rodentia</taxon>
        <taxon>Myomorpha</taxon>
        <taxon>Muroidea</taxon>
        <taxon>Muridae</taxon>
        <taxon>Murinae</taxon>
        <taxon>Mus</taxon>
        <taxon>Mus</taxon>
    </lineage>
</organism>
<reference key="1">
    <citation type="journal article" date="2004" name="Cell">
        <title>RTP family members induce functional expression of mammalian odorant receptors.</title>
        <authorList>
            <person name="Saito H."/>
            <person name="Kubota M."/>
            <person name="Roberts R.W."/>
            <person name="Chi Q."/>
            <person name="Matsunami H."/>
        </authorList>
    </citation>
    <scope>NUCLEOTIDE SEQUENCE [MRNA]</scope>
    <scope>FUNCTION</scope>
    <scope>INTERACTION WITH OLFR992</scope>
    <scope>SUBCELLULAR LOCATION</scope>
    <scope>TISSUE SPECIFICITY</scope>
    <source>
        <tissue>Olfactory epithelium</tissue>
    </source>
</reference>
<reference key="2">
    <citation type="journal article" date="2005" name="Science">
        <title>The transcriptional landscape of the mammalian genome.</title>
        <authorList>
            <person name="Carninci P."/>
            <person name="Kasukawa T."/>
            <person name="Katayama S."/>
            <person name="Gough J."/>
            <person name="Frith M.C."/>
            <person name="Maeda N."/>
            <person name="Oyama R."/>
            <person name="Ravasi T."/>
            <person name="Lenhard B."/>
            <person name="Wells C."/>
            <person name="Kodzius R."/>
            <person name="Shimokawa K."/>
            <person name="Bajic V.B."/>
            <person name="Brenner S.E."/>
            <person name="Batalov S."/>
            <person name="Forrest A.R."/>
            <person name="Zavolan M."/>
            <person name="Davis M.J."/>
            <person name="Wilming L.G."/>
            <person name="Aidinis V."/>
            <person name="Allen J.E."/>
            <person name="Ambesi-Impiombato A."/>
            <person name="Apweiler R."/>
            <person name="Aturaliya R.N."/>
            <person name="Bailey T.L."/>
            <person name="Bansal M."/>
            <person name="Baxter L."/>
            <person name="Beisel K.W."/>
            <person name="Bersano T."/>
            <person name="Bono H."/>
            <person name="Chalk A.M."/>
            <person name="Chiu K.P."/>
            <person name="Choudhary V."/>
            <person name="Christoffels A."/>
            <person name="Clutterbuck D.R."/>
            <person name="Crowe M.L."/>
            <person name="Dalla E."/>
            <person name="Dalrymple B.P."/>
            <person name="de Bono B."/>
            <person name="Della Gatta G."/>
            <person name="di Bernardo D."/>
            <person name="Down T."/>
            <person name="Engstrom P."/>
            <person name="Fagiolini M."/>
            <person name="Faulkner G."/>
            <person name="Fletcher C.F."/>
            <person name="Fukushima T."/>
            <person name="Furuno M."/>
            <person name="Futaki S."/>
            <person name="Gariboldi M."/>
            <person name="Georgii-Hemming P."/>
            <person name="Gingeras T.R."/>
            <person name="Gojobori T."/>
            <person name="Green R.E."/>
            <person name="Gustincich S."/>
            <person name="Harbers M."/>
            <person name="Hayashi Y."/>
            <person name="Hensch T.K."/>
            <person name="Hirokawa N."/>
            <person name="Hill D."/>
            <person name="Huminiecki L."/>
            <person name="Iacono M."/>
            <person name="Ikeo K."/>
            <person name="Iwama A."/>
            <person name="Ishikawa T."/>
            <person name="Jakt M."/>
            <person name="Kanapin A."/>
            <person name="Katoh M."/>
            <person name="Kawasawa Y."/>
            <person name="Kelso J."/>
            <person name="Kitamura H."/>
            <person name="Kitano H."/>
            <person name="Kollias G."/>
            <person name="Krishnan S.P."/>
            <person name="Kruger A."/>
            <person name="Kummerfeld S.K."/>
            <person name="Kurochkin I.V."/>
            <person name="Lareau L.F."/>
            <person name="Lazarevic D."/>
            <person name="Lipovich L."/>
            <person name="Liu J."/>
            <person name="Liuni S."/>
            <person name="McWilliam S."/>
            <person name="Madan Babu M."/>
            <person name="Madera M."/>
            <person name="Marchionni L."/>
            <person name="Matsuda H."/>
            <person name="Matsuzawa S."/>
            <person name="Miki H."/>
            <person name="Mignone F."/>
            <person name="Miyake S."/>
            <person name="Morris K."/>
            <person name="Mottagui-Tabar S."/>
            <person name="Mulder N."/>
            <person name="Nakano N."/>
            <person name="Nakauchi H."/>
            <person name="Ng P."/>
            <person name="Nilsson R."/>
            <person name="Nishiguchi S."/>
            <person name="Nishikawa S."/>
            <person name="Nori F."/>
            <person name="Ohara O."/>
            <person name="Okazaki Y."/>
            <person name="Orlando V."/>
            <person name="Pang K.C."/>
            <person name="Pavan W.J."/>
            <person name="Pavesi G."/>
            <person name="Pesole G."/>
            <person name="Petrovsky N."/>
            <person name="Piazza S."/>
            <person name="Reed J."/>
            <person name="Reid J.F."/>
            <person name="Ring B.Z."/>
            <person name="Ringwald M."/>
            <person name="Rost B."/>
            <person name="Ruan Y."/>
            <person name="Salzberg S.L."/>
            <person name="Sandelin A."/>
            <person name="Schneider C."/>
            <person name="Schoenbach C."/>
            <person name="Sekiguchi K."/>
            <person name="Semple C.A."/>
            <person name="Seno S."/>
            <person name="Sessa L."/>
            <person name="Sheng Y."/>
            <person name="Shibata Y."/>
            <person name="Shimada H."/>
            <person name="Shimada K."/>
            <person name="Silva D."/>
            <person name="Sinclair B."/>
            <person name="Sperling S."/>
            <person name="Stupka E."/>
            <person name="Sugiura K."/>
            <person name="Sultana R."/>
            <person name="Takenaka Y."/>
            <person name="Taki K."/>
            <person name="Tammoja K."/>
            <person name="Tan S.L."/>
            <person name="Tang S."/>
            <person name="Taylor M.S."/>
            <person name="Tegner J."/>
            <person name="Teichmann S.A."/>
            <person name="Ueda H.R."/>
            <person name="van Nimwegen E."/>
            <person name="Verardo R."/>
            <person name="Wei C.L."/>
            <person name="Yagi K."/>
            <person name="Yamanishi H."/>
            <person name="Zabarovsky E."/>
            <person name="Zhu S."/>
            <person name="Zimmer A."/>
            <person name="Hide W."/>
            <person name="Bult C."/>
            <person name="Grimmond S.M."/>
            <person name="Teasdale R.D."/>
            <person name="Liu E.T."/>
            <person name="Brusic V."/>
            <person name="Quackenbush J."/>
            <person name="Wahlestedt C."/>
            <person name="Mattick J.S."/>
            <person name="Hume D.A."/>
            <person name="Kai C."/>
            <person name="Sasaki D."/>
            <person name="Tomaru Y."/>
            <person name="Fukuda S."/>
            <person name="Kanamori-Katayama M."/>
            <person name="Suzuki M."/>
            <person name="Aoki J."/>
            <person name="Arakawa T."/>
            <person name="Iida J."/>
            <person name="Imamura K."/>
            <person name="Itoh M."/>
            <person name="Kato T."/>
            <person name="Kawaji H."/>
            <person name="Kawagashira N."/>
            <person name="Kawashima T."/>
            <person name="Kojima M."/>
            <person name="Kondo S."/>
            <person name="Konno H."/>
            <person name="Nakano K."/>
            <person name="Ninomiya N."/>
            <person name="Nishio T."/>
            <person name="Okada M."/>
            <person name="Plessy C."/>
            <person name="Shibata K."/>
            <person name="Shiraki T."/>
            <person name="Suzuki S."/>
            <person name="Tagami M."/>
            <person name="Waki K."/>
            <person name="Watahiki A."/>
            <person name="Okamura-Oho Y."/>
            <person name="Suzuki H."/>
            <person name="Kawai J."/>
            <person name="Hayashizaki Y."/>
        </authorList>
    </citation>
    <scope>NUCLEOTIDE SEQUENCE [LARGE SCALE MRNA]</scope>
    <source>
        <strain>C57BL/6J</strain>
        <tissue>Diencephalon</tissue>
        <tissue>Embryo</tissue>
        <tissue>Lung</tissue>
        <tissue>Urinary bladder</tissue>
    </source>
</reference>
<reference key="3">
    <citation type="journal article" date="2004" name="Genome Res.">
        <title>The status, quality, and expansion of the NIH full-length cDNA project: the Mammalian Gene Collection (MGC).</title>
        <authorList>
            <consortium name="The MGC Project Team"/>
        </authorList>
    </citation>
    <scope>NUCLEOTIDE SEQUENCE [LARGE SCALE MRNA]</scope>
    <source>
        <strain>C57BL/6J</strain>
        <tissue>Brain</tissue>
    </source>
</reference>
<reference key="4">
    <citation type="journal article" date="2004" name="Mol. Cell. Proteomics">
        <title>Phosphoproteomic analysis of the developing mouse brain.</title>
        <authorList>
            <person name="Ballif B.A."/>
            <person name="Villen J."/>
            <person name="Beausoleil S.A."/>
            <person name="Schwartz D."/>
            <person name="Gygi S.P."/>
        </authorList>
    </citation>
    <scope>IDENTIFICATION BY MASS SPECTROMETRY [LARGE SCALE ANALYSIS]</scope>
    <source>
        <tissue>Embryonic brain</tissue>
    </source>
</reference>
<reference key="5">
    <citation type="journal article" date="2010" name="Cell">
        <title>A tissue-specific atlas of mouse protein phosphorylation and expression.</title>
        <authorList>
            <person name="Huttlin E.L."/>
            <person name="Jedrychowski M.P."/>
            <person name="Elias J.E."/>
            <person name="Goswami T."/>
            <person name="Rad R."/>
            <person name="Beausoleil S.A."/>
            <person name="Villen J."/>
            <person name="Haas W."/>
            <person name="Sowa M.E."/>
            <person name="Gygi S.P."/>
        </authorList>
    </citation>
    <scope>PHOSPHORYLATION [LARGE SCALE ANALYSIS] AT SER-152</scope>
    <scope>IDENTIFICATION BY MASS SPECTROMETRY [LARGE SCALE ANALYSIS]</scope>
    <source>
        <tissue>Brain</tissue>
        <tissue>Brown adipose tissue</tissue>
        <tissue>Heart</tissue>
        <tissue>Kidney</tissue>
        <tissue>Lung</tissue>
        <tissue>Spleen</tissue>
        <tissue>Testis</tissue>
    </source>
</reference>
<reference key="6">
    <citation type="journal article" date="2014" name="J. Biol. Chem.">
        <title>Protrudin regulates endoplasmic reticulum morphology and function associated with the pathogenesis of hereditary spastic paraplegia.</title>
        <authorList>
            <person name="Hashimoto Y."/>
            <person name="Shirane M."/>
            <person name="Matsuzaki F."/>
            <person name="Saita S."/>
            <person name="Ohnishi T."/>
            <person name="Nakayama K.I."/>
        </authorList>
    </citation>
    <scope>SUBCELLULAR LOCATION</scope>
    <scope>INTERACTION WITH ZFYVE27</scope>
</reference>
<proteinExistence type="evidence at protein level"/>
<protein>
    <recommendedName>
        <fullName>Receptor expression-enhancing protein 1</fullName>
    </recommendedName>
</protein>
<comment type="function">
    <text evidence="1 5">Required for endoplasmic reticulum (ER) network formation, shaping and remodeling; it links ER tubules to the cytoskeleton. May also enhance the cell surface expression of odorant receptors (By similarity).</text>
</comment>
<comment type="subunit">
    <text evidence="2 5 6">Interacts with OLFR992 (PubMed:15550249). Interacts with SPAST and ATL1. Interacts (via C-terminus) with microtubules (By similarity). Interacts with ZFYVE27 (PubMed:24668814).</text>
</comment>
<comment type="subcellular location">
    <subcellularLocation>
        <location evidence="3">Membrane</location>
    </subcellularLocation>
    <subcellularLocation>
        <location evidence="2">Mitochondrion membrane</location>
        <topology evidence="3">Multi-pass membrane protein</topology>
    </subcellularLocation>
    <subcellularLocation>
        <location evidence="6">Endoplasmic reticulum</location>
    </subcellularLocation>
    <text evidence="5 6">A small proportion is detected at the cell surface. Localizes to endoplasmic reticulum tubular network.</text>
</comment>
<comment type="tissue specificity">
    <text evidence="5">Detected in olfactory sensory neurons of the olfactory epithelium, and in total brain.</text>
</comment>
<comment type="similarity">
    <text evidence="7">Belongs to the DP1 family.</text>
</comment>
<evidence type="ECO:0000250" key="1"/>
<evidence type="ECO:0000250" key="2">
    <source>
        <dbReference type="UniProtKB" id="Q9H902"/>
    </source>
</evidence>
<evidence type="ECO:0000255" key="3"/>
<evidence type="ECO:0000256" key="4">
    <source>
        <dbReference type="SAM" id="MobiDB-lite"/>
    </source>
</evidence>
<evidence type="ECO:0000269" key="5">
    <source>
    </source>
</evidence>
<evidence type="ECO:0000269" key="6">
    <source>
    </source>
</evidence>
<evidence type="ECO:0000305" key="7"/>
<evidence type="ECO:0007744" key="8">
    <source>
    </source>
</evidence>
<keyword id="KW-0256">Endoplasmic reticulum</keyword>
<keyword id="KW-0472">Membrane</keyword>
<keyword id="KW-0496">Mitochondrion</keyword>
<keyword id="KW-0597">Phosphoprotein</keyword>
<keyword id="KW-1185">Reference proteome</keyword>
<keyword id="KW-0812">Transmembrane</keyword>
<keyword id="KW-1133">Transmembrane helix</keyword>
<gene>
    <name type="primary">Reep1</name>
    <name type="synonym">D6Ertd253e</name>
</gene>
<dbReference type="EMBL" id="AY562229">
    <property type="protein sequence ID" value="AAT70674.1"/>
    <property type="molecule type" value="mRNA"/>
</dbReference>
<dbReference type="EMBL" id="AK035238">
    <property type="protein sequence ID" value="BAC28995.1"/>
    <property type="molecule type" value="mRNA"/>
</dbReference>
<dbReference type="EMBL" id="AK045056">
    <property type="protein sequence ID" value="BAC32200.1"/>
    <property type="molecule type" value="mRNA"/>
</dbReference>
<dbReference type="EMBL" id="AK053158">
    <property type="protein sequence ID" value="BAC35288.1"/>
    <property type="molecule type" value="mRNA"/>
</dbReference>
<dbReference type="EMBL" id="AK136916">
    <property type="protein sequence ID" value="BAE23168.1"/>
    <property type="molecule type" value="mRNA"/>
</dbReference>
<dbReference type="EMBL" id="BC046826">
    <property type="protein sequence ID" value="AAH46826.1"/>
    <property type="molecule type" value="mRNA"/>
</dbReference>
<dbReference type="CCDS" id="CCDS51807.1"/>
<dbReference type="RefSeq" id="NP_848723.1">
    <property type="nucleotide sequence ID" value="NM_178608.4"/>
</dbReference>
<dbReference type="BioGRID" id="206478">
    <property type="interactions" value="10"/>
</dbReference>
<dbReference type="CORUM" id="Q8BGH4"/>
<dbReference type="FunCoup" id="Q8BGH4">
    <property type="interactions" value="555"/>
</dbReference>
<dbReference type="STRING" id="10090.ENSMUSP00000112662"/>
<dbReference type="iPTMnet" id="Q8BGH4"/>
<dbReference type="PhosphoSitePlus" id="Q8BGH4"/>
<dbReference type="SwissPalm" id="Q8BGH4"/>
<dbReference type="jPOST" id="Q8BGH4"/>
<dbReference type="PaxDb" id="10090-ENSMUSP00000112662"/>
<dbReference type="PeptideAtlas" id="Q8BGH4"/>
<dbReference type="ProteomicsDB" id="254912"/>
<dbReference type="ABCD" id="Q8BGH4">
    <property type="antibodies" value="1 sequenced antibody"/>
</dbReference>
<dbReference type="Antibodypedia" id="32091">
    <property type="antibodies" value="232 antibodies from 27 providers"/>
</dbReference>
<dbReference type="DNASU" id="52250"/>
<dbReference type="Ensembl" id="ENSMUST00000121469.2">
    <property type="protein sequence ID" value="ENSMUSP00000112662.2"/>
    <property type="gene ID" value="ENSMUSG00000052852.9"/>
</dbReference>
<dbReference type="GeneID" id="52250"/>
<dbReference type="KEGG" id="mmu:52250"/>
<dbReference type="UCSC" id="uc009chc.2">
    <property type="organism name" value="mouse"/>
</dbReference>
<dbReference type="AGR" id="MGI:1098827"/>
<dbReference type="CTD" id="65055"/>
<dbReference type="MGI" id="MGI:1098827">
    <property type="gene designation" value="Reep1"/>
</dbReference>
<dbReference type="VEuPathDB" id="HostDB:ENSMUSG00000052852"/>
<dbReference type="eggNOG" id="KOG1726">
    <property type="taxonomic scope" value="Eukaryota"/>
</dbReference>
<dbReference type="GeneTree" id="ENSGT00940000159532"/>
<dbReference type="HOGENOM" id="CLU_028431_0_2_1"/>
<dbReference type="InParanoid" id="Q8BGH4"/>
<dbReference type="OMA" id="DIAVVYW"/>
<dbReference type="PhylomeDB" id="Q8BGH4"/>
<dbReference type="TreeFam" id="TF314177"/>
<dbReference type="BioGRID-ORCS" id="52250">
    <property type="hits" value="1 hit in 76 CRISPR screens"/>
</dbReference>
<dbReference type="PRO" id="PR:Q8BGH4"/>
<dbReference type="Proteomes" id="UP000000589">
    <property type="component" value="Chromosome 6"/>
</dbReference>
<dbReference type="RNAct" id="Q8BGH4">
    <property type="molecule type" value="protein"/>
</dbReference>
<dbReference type="Bgee" id="ENSMUSG00000052852">
    <property type="expression patterns" value="Expressed in indifferent gonad and 245 other cell types or tissues"/>
</dbReference>
<dbReference type="ExpressionAtlas" id="Q8BGH4">
    <property type="expression patterns" value="baseline and differential"/>
</dbReference>
<dbReference type="GO" id="GO:0005783">
    <property type="term" value="C:endoplasmic reticulum"/>
    <property type="evidence" value="ECO:0000250"/>
    <property type="project" value="UniProtKB"/>
</dbReference>
<dbReference type="GO" id="GO:0005789">
    <property type="term" value="C:endoplasmic reticulum membrane"/>
    <property type="evidence" value="ECO:0000314"/>
    <property type="project" value="UniProtKB"/>
</dbReference>
<dbReference type="GO" id="GO:0071782">
    <property type="term" value="C:endoplasmic reticulum tubular network"/>
    <property type="evidence" value="ECO:0000314"/>
    <property type="project" value="UniProtKB"/>
</dbReference>
<dbReference type="GO" id="GO:0016020">
    <property type="term" value="C:membrane"/>
    <property type="evidence" value="ECO:0000250"/>
    <property type="project" value="UniProtKB"/>
</dbReference>
<dbReference type="GO" id="GO:0031966">
    <property type="term" value="C:mitochondrial membrane"/>
    <property type="evidence" value="ECO:0007669"/>
    <property type="project" value="UniProtKB-SubCell"/>
</dbReference>
<dbReference type="GO" id="GO:0008017">
    <property type="term" value="F:microtubule binding"/>
    <property type="evidence" value="ECO:0000250"/>
    <property type="project" value="UniProtKB"/>
</dbReference>
<dbReference type="GO" id="GO:0071786">
    <property type="term" value="P:endoplasmic reticulum tubular network organization"/>
    <property type="evidence" value="ECO:0000250"/>
    <property type="project" value="UniProtKB"/>
</dbReference>
<dbReference type="GO" id="GO:0032386">
    <property type="term" value="P:regulation of intracellular transport"/>
    <property type="evidence" value="ECO:0000314"/>
    <property type="project" value="UniProtKB"/>
</dbReference>
<dbReference type="InterPro" id="IPR004345">
    <property type="entry name" value="TB2_DP1_HVA22"/>
</dbReference>
<dbReference type="PANTHER" id="PTHR12300">
    <property type="entry name" value="HVA22-LIKE PROTEINS"/>
    <property type="match status" value="1"/>
</dbReference>
<dbReference type="PANTHER" id="PTHR12300:SF33">
    <property type="entry name" value="RECEPTOR EXPRESSION-ENHANCING PROTEIN 1"/>
    <property type="match status" value="1"/>
</dbReference>
<dbReference type="Pfam" id="PF03134">
    <property type="entry name" value="TB2_DP1_HVA22"/>
    <property type="match status" value="1"/>
</dbReference>
<feature type="chain" id="PRO_0000101822" description="Receptor expression-enhancing protein 1">
    <location>
        <begin position="1"/>
        <end position="201"/>
    </location>
</feature>
<feature type="transmembrane region" description="Helical" evidence="3">
    <location>
        <begin position="1"/>
        <end position="21"/>
    </location>
</feature>
<feature type="transmembrane region" description="Helical" evidence="3">
    <location>
        <begin position="35"/>
        <end position="55"/>
    </location>
</feature>
<feature type="region of interest" description="Disordered" evidence="4">
    <location>
        <begin position="158"/>
        <end position="201"/>
    </location>
</feature>
<feature type="compositionally biased region" description="Low complexity" evidence="4">
    <location>
        <begin position="188"/>
        <end position="201"/>
    </location>
</feature>
<feature type="modified residue" description="Phosphoserine" evidence="8">
    <location>
        <position position="152"/>
    </location>
</feature>